<accession>A6V8T2</accession>
<comment type="function">
    <text evidence="1">Catalyzes amidations at positions B, D, E, and G on adenosylcobyrinic A,C-diamide. NH(2) groups are provided by glutamine, and one molecule of ATP is hydrogenolyzed for each amidation.</text>
</comment>
<comment type="pathway">
    <text evidence="1">Cofactor biosynthesis; adenosylcobalamin biosynthesis.</text>
</comment>
<comment type="similarity">
    <text evidence="1">Belongs to the CobB/CobQ family. CobQ subfamily.</text>
</comment>
<feature type="chain" id="PRO_0000332367" description="Cobyric acid synthase">
    <location>
        <begin position="1"/>
        <end position="490"/>
    </location>
</feature>
<feature type="domain" description="GATase cobBQ-type" evidence="1">
    <location>
        <begin position="252"/>
        <end position="439"/>
    </location>
</feature>
<feature type="active site" description="Nucleophile" evidence="1">
    <location>
        <position position="333"/>
    </location>
</feature>
<feature type="active site" evidence="1">
    <location>
        <position position="431"/>
    </location>
</feature>
<reference key="1">
    <citation type="submission" date="2007-06" db="EMBL/GenBank/DDBJ databases">
        <authorList>
            <person name="Dodson R.J."/>
            <person name="Harkins D."/>
            <person name="Paulsen I.T."/>
        </authorList>
    </citation>
    <scope>NUCLEOTIDE SEQUENCE [LARGE SCALE GENOMIC DNA]</scope>
    <source>
        <strain>DSM 24068 / PA7</strain>
    </source>
</reference>
<sequence>MSDRGRTLMVQGTTSDAGKSTLVTALCRWLARRGVAVAPFKPQNMALNSAVTADGGEIGRAQAVQAQACRLAPHTDMNPVLLKPNTDIGAQVIIHGRAVTSMDAAAYHDYKRVAMEAVLASHARLAAAYRVVMVEGAGSPAEINLRANDIANMGFAEAVDCPVILVADIDRGGVFAHLVGTLELLSDSERERVRGFVINRFRGDIALLQPGLDWLEARTGKPVLGVLPYVSDLHLEAEDAIDTRQAAKTGPRLKVVVPVLPRISNHTDFDPLRLHPQVELSFVGPGQALPPADLIVLPGSKSVRADLAALRERGWDEAILRHLRYGGRLLGICGGLQMLGERLHDPLGLEGAAGSSAGLGLLALETTLEADKQLRNVQGRLSLEDAPLSGYEIHAGVTRGEALARPAVVLDDGRADGARSVDGNVMGTYLHGLFESTAACSALLRWAGLREVRAVDYQALRERDIERLADLVERHLDTGRLLALCGEPHA</sequence>
<proteinExistence type="inferred from homology"/>
<gene>
    <name evidence="1" type="primary">cobQ</name>
    <name type="ordered locus">PSPA7_4113</name>
</gene>
<name>COBQ_PSEP7</name>
<protein>
    <recommendedName>
        <fullName evidence="1">Cobyric acid synthase</fullName>
    </recommendedName>
</protein>
<organism>
    <name type="scientific">Pseudomonas paraeruginosa (strain DSM 24068 / PA7)</name>
    <name type="common">Pseudomonas aeruginosa (strain PA7)</name>
    <dbReference type="NCBI Taxonomy" id="381754"/>
    <lineage>
        <taxon>Bacteria</taxon>
        <taxon>Pseudomonadati</taxon>
        <taxon>Pseudomonadota</taxon>
        <taxon>Gammaproteobacteria</taxon>
        <taxon>Pseudomonadales</taxon>
        <taxon>Pseudomonadaceae</taxon>
        <taxon>Pseudomonas</taxon>
        <taxon>Pseudomonas paraeruginosa</taxon>
    </lineage>
</organism>
<keyword id="KW-0169">Cobalamin biosynthesis</keyword>
<keyword id="KW-0315">Glutamine amidotransferase</keyword>
<dbReference type="EMBL" id="CP000744">
    <property type="protein sequence ID" value="ABR81534.1"/>
    <property type="molecule type" value="Genomic_DNA"/>
</dbReference>
<dbReference type="RefSeq" id="WP_012076593.1">
    <property type="nucleotide sequence ID" value="NC_009656.1"/>
</dbReference>
<dbReference type="SMR" id="A6V8T2"/>
<dbReference type="KEGG" id="pap:PSPA7_4113"/>
<dbReference type="HOGENOM" id="CLU_019250_2_2_6"/>
<dbReference type="UniPathway" id="UPA00148"/>
<dbReference type="Proteomes" id="UP000001582">
    <property type="component" value="Chromosome"/>
</dbReference>
<dbReference type="GO" id="GO:0015420">
    <property type="term" value="F:ABC-type vitamin B12 transporter activity"/>
    <property type="evidence" value="ECO:0007669"/>
    <property type="project" value="UniProtKB-UniRule"/>
</dbReference>
<dbReference type="GO" id="GO:0003824">
    <property type="term" value="F:catalytic activity"/>
    <property type="evidence" value="ECO:0007669"/>
    <property type="project" value="InterPro"/>
</dbReference>
<dbReference type="GO" id="GO:0009236">
    <property type="term" value="P:cobalamin biosynthetic process"/>
    <property type="evidence" value="ECO:0007669"/>
    <property type="project" value="UniProtKB-UniRule"/>
</dbReference>
<dbReference type="CDD" id="cd05389">
    <property type="entry name" value="CobQ_N"/>
    <property type="match status" value="1"/>
</dbReference>
<dbReference type="CDD" id="cd01750">
    <property type="entry name" value="GATase1_CobQ"/>
    <property type="match status" value="1"/>
</dbReference>
<dbReference type="Gene3D" id="3.40.50.880">
    <property type="match status" value="1"/>
</dbReference>
<dbReference type="Gene3D" id="3.40.50.300">
    <property type="entry name" value="P-loop containing nucleotide triphosphate hydrolases"/>
    <property type="match status" value="1"/>
</dbReference>
<dbReference type="HAMAP" id="MF_00028">
    <property type="entry name" value="CobQ"/>
    <property type="match status" value="1"/>
</dbReference>
<dbReference type="InterPro" id="IPR029062">
    <property type="entry name" value="Class_I_gatase-like"/>
</dbReference>
<dbReference type="InterPro" id="IPR002586">
    <property type="entry name" value="CobQ/CobB/MinD/ParA_Nub-bd_dom"/>
</dbReference>
<dbReference type="InterPro" id="IPR033949">
    <property type="entry name" value="CobQ_GATase1"/>
</dbReference>
<dbReference type="InterPro" id="IPR047045">
    <property type="entry name" value="CobQ_N"/>
</dbReference>
<dbReference type="InterPro" id="IPR004459">
    <property type="entry name" value="CobQ_synth"/>
</dbReference>
<dbReference type="InterPro" id="IPR011698">
    <property type="entry name" value="GATase_3"/>
</dbReference>
<dbReference type="InterPro" id="IPR027417">
    <property type="entry name" value="P-loop_NTPase"/>
</dbReference>
<dbReference type="NCBIfam" id="TIGR00313">
    <property type="entry name" value="cobQ"/>
    <property type="match status" value="1"/>
</dbReference>
<dbReference type="NCBIfam" id="NF001989">
    <property type="entry name" value="PRK00784.1"/>
    <property type="match status" value="1"/>
</dbReference>
<dbReference type="PANTHER" id="PTHR21343:SF1">
    <property type="entry name" value="COBYRIC ACID SYNTHASE"/>
    <property type="match status" value="1"/>
</dbReference>
<dbReference type="PANTHER" id="PTHR21343">
    <property type="entry name" value="DETHIOBIOTIN SYNTHETASE"/>
    <property type="match status" value="1"/>
</dbReference>
<dbReference type="Pfam" id="PF01656">
    <property type="entry name" value="CbiA"/>
    <property type="match status" value="1"/>
</dbReference>
<dbReference type="Pfam" id="PF07685">
    <property type="entry name" value="GATase_3"/>
    <property type="match status" value="1"/>
</dbReference>
<dbReference type="SUPFAM" id="SSF52317">
    <property type="entry name" value="Class I glutamine amidotransferase-like"/>
    <property type="match status" value="1"/>
</dbReference>
<dbReference type="SUPFAM" id="SSF52540">
    <property type="entry name" value="P-loop containing nucleoside triphosphate hydrolases"/>
    <property type="match status" value="1"/>
</dbReference>
<dbReference type="PROSITE" id="PS51274">
    <property type="entry name" value="GATASE_COBBQ"/>
    <property type="match status" value="1"/>
</dbReference>
<evidence type="ECO:0000255" key="1">
    <source>
        <dbReference type="HAMAP-Rule" id="MF_00028"/>
    </source>
</evidence>